<comment type="function">
    <text evidence="1">Participates in the assembly of the infectious particles by decorating the outer surface of the capsid shell and thus forming a layer between the capsid and the tegument. Complexes composed of the major capsid protein and small capsomere-interacting protein/SCP assemble together in the host cytoplasm and are translocated to the nucleus, where they accumulate and participate in capsid assembly.</text>
</comment>
<comment type="subunit">
    <text evidence="1">Interacts with the major capsid protein/MCP.</text>
</comment>
<comment type="subcellular location">
    <subcellularLocation>
        <location evidence="1">Virion</location>
    </subcellularLocation>
    <subcellularLocation>
        <location evidence="1">Host nucleus</location>
    </subcellularLocation>
</comment>
<comment type="similarity">
    <text evidence="1">Belongs to the herpesviridae small capsomere-interacting protein family.</text>
</comment>
<sequence length="170" mass="18569">MSNFKVRDPVIQERLDHDYAHHPLVARMNTLDQGNMSQAEYLVQKRHYLVFLIAHHYYEAYLRRMGGIQRRDHLQTLRDQKPRERADRVSAASAYDAGTFTVPSRPGPASGTTPGGQDSLGVSGSSITTLSSGPHSLSPASDILTTLSSTTETAAPAVADARKPPSGKKK</sequence>
<evidence type="ECO:0000255" key="1">
    <source>
        <dbReference type="HAMAP-Rule" id="MF_04022"/>
    </source>
</evidence>
<evidence type="ECO:0000256" key="2">
    <source>
        <dbReference type="SAM" id="MobiDB-lite"/>
    </source>
</evidence>
<protein>
    <recommendedName>
        <fullName evidence="1">Small capsomere-interacting protein</fullName>
    </recommendedName>
</protein>
<organismHost>
    <name type="scientific">Homo sapiens</name>
    <name type="common">Human</name>
    <dbReference type="NCBI Taxonomy" id="9606"/>
</organismHost>
<gene>
    <name evidence="1" type="primary">SCP</name>
    <name type="ordered locus">ORF65</name>
</gene>
<dbReference type="EMBL" id="AF148805">
    <property type="protein sequence ID" value="ABD28922.1"/>
    <property type="molecule type" value="Genomic_DNA"/>
</dbReference>
<dbReference type="RefSeq" id="YP_001129422.1">
    <property type="nucleotide sequence ID" value="NC_009333.1"/>
</dbReference>
<dbReference type="PDB" id="6CGR">
    <property type="method" value="EM"/>
    <property type="resolution" value="4.20 A"/>
    <property type="chains" value="A=1-170"/>
</dbReference>
<dbReference type="PDB" id="6PPB">
    <property type="method" value="EM"/>
    <property type="resolution" value="4.30 A"/>
    <property type="chains" value="0/1/2/3=1-170"/>
</dbReference>
<dbReference type="PDB" id="6PPD">
    <property type="method" value="EM"/>
    <property type="resolution" value="3.70 A"/>
    <property type="chains" value="0/1/2/3/A=1-170"/>
</dbReference>
<dbReference type="PDB" id="6PPH">
    <property type="method" value="EM"/>
    <property type="resolution" value="3.80 A"/>
    <property type="chains" value="0/1/2/3/A=1-170"/>
</dbReference>
<dbReference type="PDBsum" id="6CGR"/>
<dbReference type="PDBsum" id="6PPB"/>
<dbReference type="PDBsum" id="6PPD"/>
<dbReference type="PDBsum" id="6PPH"/>
<dbReference type="SMR" id="Q2HR63"/>
<dbReference type="DNASU" id="4961451"/>
<dbReference type="GeneID" id="4961451"/>
<dbReference type="KEGG" id="vg:4961451"/>
<dbReference type="Proteomes" id="UP000000942">
    <property type="component" value="Segment"/>
</dbReference>
<dbReference type="GO" id="GO:0042025">
    <property type="term" value="C:host cell nucleus"/>
    <property type="evidence" value="ECO:0007669"/>
    <property type="project" value="UniProtKB-SubCell"/>
</dbReference>
<dbReference type="GO" id="GO:0019028">
    <property type="term" value="C:viral capsid"/>
    <property type="evidence" value="ECO:0007669"/>
    <property type="project" value="UniProtKB-UniRule"/>
</dbReference>
<dbReference type="GO" id="GO:0016032">
    <property type="term" value="P:viral process"/>
    <property type="evidence" value="ECO:0007669"/>
    <property type="project" value="UniProtKB-UniRule"/>
</dbReference>
<dbReference type="HAMAP" id="MF_04022">
    <property type="entry name" value="HSV_SCP_gammahv"/>
    <property type="match status" value="1"/>
</dbReference>
<dbReference type="InterPro" id="IPR009299">
    <property type="entry name" value="Herpes_capsid"/>
</dbReference>
<dbReference type="Pfam" id="PF06112">
    <property type="entry name" value="Herpes_capsid"/>
    <property type="match status" value="1"/>
</dbReference>
<accession>Q2HR63</accession>
<reference key="1">
    <citation type="journal article" date="1999" name="J. Virol.">
        <title>Identification of a spliced gene from Kaposi's sarcoma-associated herpesvirus encoding a protein with similarities to latent membrane proteins 1 and 2A of Epstein-Barr virus.</title>
        <authorList>
            <person name="Glenn M."/>
            <person name="Rainbow L."/>
            <person name="Aurade F."/>
            <person name="Davison A."/>
            <person name="Schulz T.F."/>
        </authorList>
    </citation>
    <scope>NUCLEOTIDE SEQUENCE [LARGE SCALE GENOMIC DNA]</scope>
</reference>
<reference key="2">
    <citation type="journal article" date="2006" name="J. Gen. Virol.">
        <title>Kaposi's sarcoma-associated herpesvirus immune modulation: an overview.</title>
        <authorList>
            <person name="Rezaee S.A.R."/>
            <person name="Cunningham C."/>
            <person name="Davison A.J."/>
            <person name="Blackbourn D.J."/>
        </authorList>
    </citation>
    <scope>NUCLEOTIDE SEQUENCE [LARGE SCALE GENOMIC DNA]</scope>
</reference>
<keyword id="KW-0002">3D-structure</keyword>
<keyword id="KW-0167">Capsid protein</keyword>
<keyword id="KW-1048">Host nucleus</keyword>
<keyword id="KW-1185">Reference proteome</keyword>
<keyword id="KW-0946">Virion</keyword>
<proteinExistence type="evidence at protein level"/>
<name>SCP_HHV8P</name>
<feature type="chain" id="PRO_0000423790" description="Small capsomere-interacting protein">
    <location>
        <begin position="1"/>
        <end position="170"/>
    </location>
</feature>
<feature type="region of interest" description="Disordered" evidence="2">
    <location>
        <begin position="76"/>
        <end position="170"/>
    </location>
</feature>
<feature type="compositionally biased region" description="Basic and acidic residues" evidence="2">
    <location>
        <begin position="76"/>
        <end position="88"/>
    </location>
</feature>
<feature type="compositionally biased region" description="Polar residues" evidence="2">
    <location>
        <begin position="110"/>
        <end position="139"/>
    </location>
</feature>
<feature type="compositionally biased region" description="Low complexity" evidence="2">
    <location>
        <begin position="144"/>
        <end position="155"/>
    </location>
</feature>
<organism>
    <name type="scientific">Human herpesvirus 8 type P (isolate GK18)</name>
    <name type="common">HHV-8</name>
    <name type="synonym">Kaposi's sarcoma-associated herpesvirus</name>
    <dbReference type="NCBI Taxonomy" id="868565"/>
    <lineage>
        <taxon>Viruses</taxon>
        <taxon>Duplodnaviria</taxon>
        <taxon>Heunggongvirae</taxon>
        <taxon>Peploviricota</taxon>
        <taxon>Herviviricetes</taxon>
        <taxon>Herpesvirales</taxon>
        <taxon>Orthoherpesviridae</taxon>
        <taxon>Gammaherpesvirinae</taxon>
        <taxon>Rhadinovirus</taxon>
        <taxon>Rhadinovirus humangamma8</taxon>
        <taxon>Human herpesvirus 8</taxon>
    </lineage>
</organism>